<accession>Q9PBE1</accession>
<feature type="chain" id="PRO_0000094396" description="Elongation factor P-like protein">
    <location>
        <begin position="1"/>
        <end position="188"/>
    </location>
</feature>
<dbReference type="EMBL" id="AE003849">
    <property type="protein sequence ID" value="AAF85002.1"/>
    <property type="status" value="ALT_INIT"/>
    <property type="molecule type" value="Genomic_DNA"/>
</dbReference>
<dbReference type="PIR" id="G82586">
    <property type="entry name" value="G82586"/>
</dbReference>
<dbReference type="SMR" id="Q9PBE1"/>
<dbReference type="STRING" id="160492.XF_2203"/>
<dbReference type="KEGG" id="xfa:XF_2203"/>
<dbReference type="eggNOG" id="COG0231">
    <property type="taxonomic scope" value="Bacteria"/>
</dbReference>
<dbReference type="HOGENOM" id="CLU_074944_2_0_6"/>
<dbReference type="Proteomes" id="UP000000812">
    <property type="component" value="Chromosome"/>
</dbReference>
<dbReference type="GO" id="GO:0005737">
    <property type="term" value="C:cytoplasm"/>
    <property type="evidence" value="ECO:0007669"/>
    <property type="project" value="InterPro"/>
</dbReference>
<dbReference type="GO" id="GO:0003746">
    <property type="term" value="F:translation elongation factor activity"/>
    <property type="evidence" value="ECO:0007669"/>
    <property type="project" value="UniProtKB-UniRule"/>
</dbReference>
<dbReference type="GO" id="GO:0043043">
    <property type="term" value="P:peptide biosynthetic process"/>
    <property type="evidence" value="ECO:0007669"/>
    <property type="project" value="InterPro"/>
</dbReference>
<dbReference type="CDD" id="cd05794">
    <property type="entry name" value="S1_EF-P_repeat_2"/>
    <property type="match status" value="1"/>
</dbReference>
<dbReference type="FunFam" id="2.40.50.140:FF:000004">
    <property type="entry name" value="Elongation factor P"/>
    <property type="match status" value="1"/>
</dbReference>
<dbReference type="Gene3D" id="2.30.30.30">
    <property type="match status" value="1"/>
</dbReference>
<dbReference type="Gene3D" id="2.40.50.140">
    <property type="entry name" value="Nucleic acid-binding proteins"/>
    <property type="match status" value="2"/>
</dbReference>
<dbReference type="HAMAP" id="MF_00646">
    <property type="entry name" value="EFP"/>
    <property type="match status" value="1"/>
</dbReference>
<dbReference type="InterPro" id="IPR015365">
    <property type="entry name" value="Elong-fact-P_C"/>
</dbReference>
<dbReference type="InterPro" id="IPR012340">
    <property type="entry name" value="NA-bd_OB-fold"/>
</dbReference>
<dbReference type="InterPro" id="IPR014722">
    <property type="entry name" value="Rib_uL2_dom2"/>
</dbReference>
<dbReference type="InterPro" id="IPR020599">
    <property type="entry name" value="Transl_elong_fac_P/YeiP"/>
</dbReference>
<dbReference type="InterPro" id="IPR013185">
    <property type="entry name" value="Transl_elong_KOW-like"/>
</dbReference>
<dbReference type="InterPro" id="IPR011897">
    <property type="entry name" value="Transl_elong_p-like_YeiP"/>
</dbReference>
<dbReference type="InterPro" id="IPR001059">
    <property type="entry name" value="Transl_elong_P/YeiP_cen"/>
</dbReference>
<dbReference type="InterPro" id="IPR013852">
    <property type="entry name" value="Transl_elong_P/YeiP_CS"/>
</dbReference>
<dbReference type="InterPro" id="IPR008991">
    <property type="entry name" value="Translation_prot_SH3-like_sf"/>
</dbReference>
<dbReference type="NCBIfam" id="NF003392">
    <property type="entry name" value="PRK04542.1"/>
    <property type="match status" value="1"/>
</dbReference>
<dbReference type="NCBIfam" id="TIGR02178">
    <property type="entry name" value="yeiP"/>
    <property type="match status" value="1"/>
</dbReference>
<dbReference type="PANTHER" id="PTHR30053">
    <property type="entry name" value="ELONGATION FACTOR P"/>
    <property type="match status" value="1"/>
</dbReference>
<dbReference type="PANTHER" id="PTHR30053:SF14">
    <property type="entry name" value="TRANSLATION ELONGATION FACTOR KOW-LIKE DOMAIN-CONTAINING PROTEIN"/>
    <property type="match status" value="1"/>
</dbReference>
<dbReference type="Pfam" id="PF01132">
    <property type="entry name" value="EFP"/>
    <property type="match status" value="1"/>
</dbReference>
<dbReference type="Pfam" id="PF08207">
    <property type="entry name" value="EFP_N"/>
    <property type="match status" value="1"/>
</dbReference>
<dbReference type="Pfam" id="PF09285">
    <property type="entry name" value="Elong-fact-P_C"/>
    <property type="match status" value="1"/>
</dbReference>
<dbReference type="PIRSF" id="PIRSF005901">
    <property type="entry name" value="EF-P"/>
    <property type="match status" value="1"/>
</dbReference>
<dbReference type="SMART" id="SM01185">
    <property type="entry name" value="EFP"/>
    <property type="match status" value="1"/>
</dbReference>
<dbReference type="SMART" id="SM00841">
    <property type="entry name" value="Elong-fact-P_C"/>
    <property type="match status" value="1"/>
</dbReference>
<dbReference type="SUPFAM" id="SSF50249">
    <property type="entry name" value="Nucleic acid-binding proteins"/>
    <property type="match status" value="2"/>
</dbReference>
<dbReference type="SUPFAM" id="SSF50104">
    <property type="entry name" value="Translation proteins SH3-like domain"/>
    <property type="match status" value="1"/>
</dbReference>
<dbReference type="PROSITE" id="PS01275">
    <property type="entry name" value="EFP"/>
    <property type="match status" value="1"/>
</dbReference>
<gene>
    <name type="ordered locus">XF_2203</name>
</gene>
<name>EFPL_XYLFA</name>
<organism>
    <name type="scientific">Xylella fastidiosa (strain 9a5c)</name>
    <dbReference type="NCBI Taxonomy" id="160492"/>
    <lineage>
        <taxon>Bacteria</taxon>
        <taxon>Pseudomonadati</taxon>
        <taxon>Pseudomonadota</taxon>
        <taxon>Gammaproteobacteria</taxon>
        <taxon>Lysobacterales</taxon>
        <taxon>Lysobacteraceae</taxon>
        <taxon>Xylella</taxon>
    </lineage>
</organism>
<comment type="similarity">
    <text evidence="1">Belongs to the elongation factor P family.</text>
</comment>
<comment type="sequence caution" evidence="2">
    <conflict type="erroneous initiation">
        <sequence resource="EMBL-CDS" id="AAF85002"/>
    </conflict>
</comment>
<protein>
    <recommendedName>
        <fullName evidence="1">Elongation factor P-like protein</fullName>
    </recommendedName>
</protein>
<sequence>MKASEMKKGSIVEYNNGTYQIRDIQRSSPQGRGGNVRFRFVMYSVPGGSKLEASFDADEMLTAVELLRREASFSYKDGEAFVFLDEEDYTLYTLEAEAIGDNAGYISEGLSGCYVQLIDASPVALQLPQHVVLEVVDTPPELKGGTATKRPKPAKLITGIEVMVPEYITTGERILVNTTTGAFGGRAS</sequence>
<reference key="1">
    <citation type="journal article" date="2000" name="Nature">
        <title>The genome sequence of the plant pathogen Xylella fastidiosa.</title>
        <authorList>
            <person name="Simpson A.J.G."/>
            <person name="Reinach F.C."/>
            <person name="Arruda P."/>
            <person name="Abreu F.A."/>
            <person name="Acencio M."/>
            <person name="Alvarenga R."/>
            <person name="Alves L.M.C."/>
            <person name="Araya J.E."/>
            <person name="Baia G.S."/>
            <person name="Baptista C.S."/>
            <person name="Barros M.H."/>
            <person name="Bonaccorsi E.D."/>
            <person name="Bordin S."/>
            <person name="Bove J.M."/>
            <person name="Briones M.R.S."/>
            <person name="Bueno M.R.P."/>
            <person name="Camargo A.A."/>
            <person name="Camargo L.E.A."/>
            <person name="Carraro D.M."/>
            <person name="Carrer H."/>
            <person name="Colauto N.B."/>
            <person name="Colombo C."/>
            <person name="Costa F.F."/>
            <person name="Costa M.C.R."/>
            <person name="Costa-Neto C.M."/>
            <person name="Coutinho L.L."/>
            <person name="Cristofani M."/>
            <person name="Dias-Neto E."/>
            <person name="Docena C."/>
            <person name="El-Dorry H."/>
            <person name="Facincani A.P."/>
            <person name="Ferreira A.J.S."/>
            <person name="Ferreira V.C.A."/>
            <person name="Ferro J.A."/>
            <person name="Fraga J.S."/>
            <person name="Franca S.C."/>
            <person name="Franco M.C."/>
            <person name="Frohme M."/>
            <person name="Furlan L.R."/>
            <person name="Garnier M."/>
            <person name="Goldman G.H."/>
            <person name="Goldman M.H.S."/>
            <person name="Gomes S.L."/>
            <person name="Gruber A."/>
            <person name="Ho P.L."/>
            <person name="Hoheisel J.D."/>
            <person name="Junqueira M.L."/>
            <person name="Kemper E.L."/>
            <person name="Kitajima J.P."/>
            <person name="Krieger J.E."/>
            <person name="Kuramae E.E."/>
            <person name="Laigret F."/>
            <person name="Lambais M.R."/>
            <person name="Leite L.C.C."/>
            <person name="Lemos E.G.M."/>
            <person name="Lemos M.V.F."/>
            <person name="Lopes S.A."/>
            <person name="Lopes C.R."/>
            <person name="Machado J.A."/>
            <person name="Machado M.A."/>
            <person name="Madeira A.M.B.N."/>
            <person name="Madeira H.M.F."/>
            <person name="Marino C.L."/>
            <person name="Marques M.V."/>
            <person name="Martins E.A.L."/>
            <person name="Martins E.M.F."/>
            <person name="Matsukuma A.Y."/>
            <person name="Menck C.F.M."/>
            <person name="Miracca E.C."/>
            <person name="Miyaki C.Y."/>
            <person name="Monteiro-Vitorello C.B."/>
            <person name="Moon D.H."/>
            <person name="Nagai M.A."/>
            <person name="Nascimento A.L.T.O."/>
            <person name="Netto L.E.S."/>
            <person name="Nhani A. Jr."/>
            <person name="Nobrega F.G."/>
            <person name="Nunes L.R."/>
            <person name="Oliveira M.A."/>
            <person name="de Oliveira M.C."/>
            <person name="de Oliveira R.C."/>
            <person name="Palmieri D.A."/>
            <person name="Paris A."/>
            <person name="Peixoto B.R."/>
            <person name="Pereira G.A.G."/>
            <person name="Pereira H.A. Jr."/>
            <person name="Pesquero J.B."/>
            <person name="Quaggio R.B."/>
            <person name="Roberto P.G."/>
            <person name="Rodrigues V."/>
            <person name="de Rosa A.J.M."/>
            <person name="de Rosa V.E. Jr."/>
            <person name="de Sa R.G."/>
            <person name="Santelli R.V."/>
            <person name="Sawasaki H.E."/>
            <person name="da Silva A.C.R."/>
            <person name="da Silva A.M."/>
            <person name="da Silva F.R."/>
            <person name="Silva W.A. Jr."/>
            <person name="da Silveira J.F."/>
            <person name="Silvestri M.L.Z."/>
            <person name="Siqueira W.J."/>
            <person name="de Souza A.A."/>
            <person name="de Souza A.P."/>
            <person name="Terenzi M.F."/>
            <person name="Truffi D."/>
            <person name="Tsai S.M."/>
            <person name="Tsuhako M.H."/>
            <person name="Vallada H."/>
            <person name="Van Sluys M.A."/>
            <person name="Verjovski-Almeida S."/>
            <person name="Vettore A.L."/>
            <person name="Zago M.A."/>
            <person name="Zatz M."/>
            <person name="Meidanis J."/>
            <person name="Setubal J.C."/>
        </authorList>
    </citation>
    <scope>NUCLEOTIDE SEQUENCE [LARGE SCALE GENOMIC DNA]</scope>
    <source>
        <strain>9a5c</strain>
    </source>
</reference>
<evidence type="ECO:0000255" key="1">
    <source>
        <dbReference type="HAMAP-Rule" id="MF_00646"/>
    </source>
</evidence>
<evidence type="ECO:0000305" key="2"/>
<proteinExistence type="inferred from homology"/>